<organism>
    <name type="scientific">Burkholderia pseudomallei (strain 668)</name>
    <dbReference type="NCBI Taxonomy" id="320373"/>
    <lineage>
        <taxon>Bacteria</taxon>
        <taxon>Pseudomonadati</taxon>
        <taxon>Pseudomonadota</taxon>
        <taxon>Betaproteobacteria</taxon>
        <taxon>Burkholderiales</taxon>
        <taxon>Burkholderiaceae</taxon>
        <taxon>Burkholderia</taxon>
        <taxon>pseudomallei group</taxon>
    </lineage>
</organism>
<accession>A3NEG8</accession>
<sequence length="102" mass="10709">MNKIRKGDEVIVITGKDKGKRGVVLAVGAEHVTVEGINLVKKHVKPNPMKGTTGGVEAKTMPLHISNVALVDANGKASRVGIKVEDGKKVRFLKTTGAVLSA</sequence>
<comment type="function">
    <text evidence="1">One of two assembly initiator proteins, it binds directly to the 5'-end of the 23S rRNA, where it nucleates assembly of the 50S subunit.</text>
</comment>
<comment type="function">
    <text evidence="1">One of the proteins that surrounds the polypeptide exit tunnel on the outside of the subunit.</text>
</comment>
<comment type="subunit">
    <text evidence="1">Part of the 50S ribosomal subunit.</text>
</comment>
<comment type="similarity">
    <text evidence="1">Belongs to the universal ribosomal protein uL24 family.</text>
</comment>
<keyword id="KW-0687">Ribonucleoprotein</keyword>
<keyword id="KW-0689">Ribosomal protein</keyword>
<keyword id="KW-0694">RNA-binding</keyword>
<keyword id="KW-0699">rRNA-binding</keyword>
<dbReference type="EMBL" id="CP000570">
    <property type="protein sequence ID" value="ABN83127.1"/>
    <property type="molecule type" value="Genomic_DNA"/>
</dbReference>
<dbReference type="RefSeq" id="WP_004197950.1">
    <property type="nucleotide sequence ID" value="NC_009074.1"/>
</dbReference>
<dbReference type="SMR" id="A3NEG8"/>
<dbReference type="GeneID" id="93061821"/>
<dbReference type="KEGG" id="bpd:BURPS668_3735"/>
<dbReference type="HOGENOM" id="CLU_093315_2_2_4"/>
<dbReference type="GO" id="GO:1990904">
    <property type="term" value="C:ribonucleoprotein complex"/>
    <property type="evidence" value="ECO:0007669"/>
    <property type="project" value="UniProtKB-KW"/>
</dbReference>
<dbReference type="GO" id="GO:0005840">
    <property type="term" value="C:ribosome"/>
    <property type="evidence" value="ECO:0007669"/>
    <property type="project" value="UniProtKB-KW"/>
</dbReference>
<dbReference type="GO" id="GO:0019843">
    <property type="term" value="F:rRNA binding"/>
    <property type="evidence" value="ECO:0007669"/>
    <property type="project" value="UniProtKB-UniRule"/>
</dbReference>
<dbReference type="GO" id="GO:0003735">
    <property type="term" value="F:structural constituent of ribosome"/>
    <property type="evidence" value="ECO:0007669"/>
    <property type="project" value="InterPro"/>
</dbReference>
<dbReference type="GO" id="GO:0006412">
    <property type="term" value="P:translation"/>
    <property type="evidence" value="ECO:0007669"/>
    <property type="project" value="UniProtKB-UniRule"/>
</dbReference>
<dbReference type="CDD" id="cd06089">
    <property type="entry name" value="KOW_RPL26"/>
    <property type="match status" value="1"/>
</dbReference>
<dbReference type="Gene3D" id="2.30.30.30">
    <property type="match status" value="1"/>
</dbReference>
<dbReference type="HAMAP" id="MF_01326_B">
    <property type="entry name" value="Ribosomal_uL24_B"/>
    <property type="match status" value="1"/>
</dbReference>
<dbReference type="InterPro" id="IPR005824">
    <property type="entry name" value="KOW"/>
</dbReference>
<dbReference type="InterPro" id="IPR014722">
    <property type="entry name" value="Rib_uL2_dom2"/>
</dbReference>
<dbReference type="InterPro" id="IPR003256">
    <property type="entry name" value="Ribosomal_uL24"/>
</dbReference>
<dbReference type="InterPro" id="IPR005825">
    <property type="entry name" value="Ribosomal_uL24_CS"/>
</dbReference>
<dbReference type="InterPro" id="IPR041988">
    <property type="entry name" value="Ribosomal_uL24_KOW"/>
</dbReference>
<dbReference type="InterPro" id="IPR008991">
    <property type="entry name" value="Translation_prot_SH3-like_sf"/>
</dbReference>
<dbReference type="NCBIfam" id="TIGR01079">
    <property type="entry name" value="rplX_bact"/>
    <property type="match status" value="1"/>
</dbReference>
<dbReference type="PANTHER" id="PTHR12903">
    <property type="entry name" value="MITOCHONDRIAL RIBOSOMAL PROTEIN L24"/>
    <property type="match status" value="1"/>
</dbReference>
<dbReference type="Pfam" id="PF00467">
    <property type="entry name" value="KOW"/>
    <property type="match status" value="1"/>
</dbReference>
<dbReference type="Pfam" id="PF17136">
    <property type="entry name" value="ribosomal_L24"/>
    <property type="match status" value="1"/>
</dbReference>
<dbReference type="SUPFAM" id="SSF50104">
    <property type="entry name" value="Translation proteins SH3-like domain"/>
    <property type="match status" value="1"/>
</dbReference>
<dbReference type="PROSITE" id="PS01108">
    <property type="entry name" value="RIBOSOMAL_L24"/>
    <property type="match status" value="1"/>
</dbReference>
<proteinExistence type="inferred from homology"/>
<gene>
    <name evidence="1" type="primary">rplX</name>
    <name type="ordered locus">BURPS668_3735</name>
</gene>
<protein>
    <recommendedName>
        <fullName evidence="1">Large ribosomal subunit protein uL24</fullName>
    </recommendedName>
    <alternativeName>
        <fullName evidence="2">50S ribosomal protein L24</fullName>
    </alternativeName>
</protein>
<reference key="1">
    <citation type="journal article" date="2010" name="Genome Biol. Evol.">
        <title>Continuing evolution of Burkholderia mallei through genome reduction and large-scale rearrangements.</title>
        <authorList>
            <person name="Losada L."/>
            <person name="Ronning C.M."/>
            <person name="DeShazer D."/>
            <person name="Woods D."/>
            <person name="Fedorova N."/>
            <person name="Kim H.S."/>
            <person name="Shabalina S.A."/>
            <person name="Pearson T.R."/>
            <person name="Brinkac L."/>
            <person name="Tan P."/>
            <person name="Nandi T."/>
            <person name="Crabtree J."/>
            <person name="Badger J."/>
            <person name="Beckstrom-Sternberg S."/>
            <person name="Saqib M."/>
            <person name="Schutzer S.E."/>
            <person name="Keim P."/>
            <person name="Nierman W.C."/>
        </authorList>
    </citation>
    <scope>NUCLEOTIDE SEQUENCE [LARGE SCALE GENOMIC DNA]</scope>
    <source>
        <strain>668</strain>
    </source>
</reference>
<name>RL24_BURP6</name>
<evidence type="ECO:0000255" key="1">
    <source>
        <dbReference type="HAMAP-Rule" id="MF_01326"/>
    </source>
</evidence>
<evidence type="ECO:0000305" key="2"/>
<feature type="chain" id="PRO_1000052196" description="Large ribosomal subunit protein uL24">
    <location>
        <begin position="1"/>
        <end position="102"/>
    </location>
</feature>